<feature type="chain" id="PRO_0000435817" description="Protein CMS1">
    <location>
        <begin position="1"/>
        <end position="251"/>
    </location>
</feature>
<feature type="region of interest" description="Disordered" evidence="2">
    <location>
        <begin position="1"/>
        <end position="37"/>
    </location>
</feature>
<sequence length="251" mass="28695">MSLDNDINTKKRKLQDDEKPRKKRKHKRPTRDDDADLDVEAGLNRAFARMDGQLLADHLAQKTRRFGTELSSVELNDLYISAASIRDSSSFEKDRTLENLPSFLEKFAQEKEKLDEAPKKNGSPHTLIVAAAGLRAADLVRACRKFQKKGSPVAKLFAKHFKLEEQVAFLNKTRTGIAVGTPQRLIDLIEHGALSVENLRRIVVDASHIDQKKRNITDMRETMMPLAKLLARADFKERYTDEKKHIDLLFY</sequence>
<protein>
    <recommendedName>
        <fullName>Protein CMS1</fullName>
    </recommendedName>
</protein>
<evidence type="ECO:0000250" key="1">
    <source>
        <dbReference type="UniProtKB" id="Q07897"/>
    </source>
</evidence>
<evidence type="ECO:0000256" key="2">
    <source>
        <dbReference type="SAM" id="MobiDB-lite"/>
    </source>
</evidence>
<evidence type="ECO:0000305" key="3"/>
<gene>
    <name type="primary">CSM1</name>
    <name type="ORF">CTHT_0012990</name>
</gene>
<comment type="function">
    <text evidence="1">May play a role in the regulation of DNA replication and cell cycle control.</text>
</comment>
<comment type="subcellular location">
    <subcellularLocation>
        <location evidence="1">Nucleus</location>
    </subcellularLocation>
</comment>
<comment type="similarity">
    <text evidence="3">Belongs to the CMS1 family.</text>
</comment>
<comment type="sequence caution" evidence="3">
    <conflict type="erroneous gene model prediction">
        <sequence resource="EMBL-CDS" id="EGS22823"/>
    </conflict>
</comment>
<accession>G0S1B3</accession>
<organism>
    <name type="scientific">Chaetomium thermophilum (strain DSM 1495 / CBS 144.50 / IMI 039719)</name>
    <name type="common">Thermochaetoides thermophila</name>
    <dbReference type="NCBI Taxonomy" id="759272"/>
    <lineage>
        <taxon>Eukaryota</taxon>
        <taxon>Fungi</taxon>
        <taxon>Dikarya</taxon>
        <taxon>Ascomycota</taxon>
        <taxon>Pezizomycotina</taxon>
        <taxon>Sordariomycetes</taxon>
        <taxon>Sordariomycetidae</taxon>
        <taxon>Sordariales</taxon>
        <taxon>Chaetomiaceae</taxon>
        <taxon>Thermochaetoides</taxon>
    </lineage>
</organism>
<reference key="1">
    <citation type="journal article" date="2011" name="Cell">
        <title>Insight into structure and assembly of the nuclear pore complex by utilizing the genome of a eukaryotic thermophile.</title>
        <authorList>
            <person name="Amlacher S."/>
            <person name="Sarges P."/>
            <person name="Flemming D."/>
            <person name="van Noort V."/>
            <person name="Kunze R."/>
            <person name="Devos D.P."/>
            <person name="Arumugam M."/>
            <person name="Bork P."/>
            <person name="Hurt E."/>
        </authorList>
    </citation>
    <scope>NUCLEOTIDE SEQUENCE [LARGE SCALE GENOMIC DNA]</scope>
    <source>
        <strain>DSM 1495 / CBS 144.50 / IMI 039719</strain>
    </source>
</reference>
<name>CMS1_CHATD</name>
<proteinExistence type="inferred from homology"/>
<keyword id="KW-0539">Nucleus</keyword>
<keyword id="KW-1185">Reference proteome</keyword>
<dbReference type="EMBL" id="GL988039">
    <property type="protein sequence ID" value="EGS22823.1"/>
    <property type="status" value="ALT_SEQ"/>
    <property type="molecule type" value="Genomic_DNA"/>
</dbReference>
<dbReference type="RefSeq" id="XP_006691815.1">
    <property type="nucleotide sequence ID" value="XM_006691752.1"/>
</dbReference>
<dbReference type="SMR" id="G0S1B3"/>
<dbReference type="STRING" id="759272.G0S1B3"/>
<dbReference type="GeneID" id="18255337"/>
<dbReference type="KEGG" id="cthr:CTHT_0012990"/>
<dbReference type="eggNOG" id="KOG3089">
    <property type="taxonomic scope" value="Eukaryota"/>
</dbReference>
<dbReference type="HOGENOM" id="CLU_057568_0_1_1"/>
<dbReference type="OrthoDB" id="1929311at2759"/>
<dbReference type="Proteomes" id="UP000008066">
    <property type="component" value="Unassembled WGS sequence"/>
</dbReference>
<dbReference type="GO" id="GO:0030686">
    <property type="term" value="C:90S preribosome"/>
    <property type="evidence" value="ECO:0007669"/>
    <property type="project" value="TreeGrafter"/>
</dbReference>
<dbReference type="GO" id="GO:0005634">
    <property type="term" value="C:nucleus"/>
    <property type="evidence" value="ECO:0007669"/>
    <property type="project" value="UniProtKB-SubCell"/>
</dbReference>
<dbReference type="Gene3D" id="3.40.50.300">
    <property type="entry name" value="P-loop containing nucleotide triphosphate hydrolases"/>
    <property type="match status" value="1"/>
</dbReference>
<dbReference type="InterPro" id="IPR032704">
    <property type="entry name" value="Cms1"/>
</dbReference>
<dbReference type="InterPro" id="IPR027417">
    <property type="entry name" value="P-loop_NTPase"/>
</dbReference>
<dbReference type="PANTHER" id="PTHR24030">
    <property type="entry name" value="PROTEIN CMSS1"/>
    <property type="match status" value="1"/>
</dbReference>
<dbReference type="PANTHER" id="PTHR24030:SF0">
    <property type="entry name" value="PROTEIN CMSS1"/>
    <property type="match status" value="1"/>
</dbReference>
<dbReference type="Pfam" id="PF14617">
    <property type="entry name" value="CMS1"/>
    <property type="match status" value="1"/>
</dbReference>
<dbReference type="SUPFAM" id="SSF52540">
    <property type="entry name" value="P-loop containing nucleoside triphosphate hydrolases"/>
    <property type="match status" value="1"/>
</dbReference>